<evidence type="ECO:0000255" key="1">
    <source>
        <dbReference type="HAMAP-Rule" id="MF_00111"/>
    </source>
</evidence>
<dbReference type="EC" id="2.5.1.7" evidence="1"/>
<dbReference type="EMBL" id="AP010904">
    <property type="protein sequence ID" value="BAH75394.1"/>
    <property type="molecule type" value="Genomic_DNA"/>
</dbReference>
<dbReference type="RefSeq" id="WP_015860593.1">
    <property type="nucleotide sequence ID" value="NC_012796.1"/>
</dbReference>
<dbReference type="SMR" id="C4XR49"/>
<dbReference type="STRING" id="573370.DMR_19030"/>
<dbReference type="KEGG" id="dma:DMR_19030"/>
<dbReference type="eggNOG" id="COG0766">
    <property type="taxonomic scope" value="Bacteria"/>
</dbReference>
<dbReference type="HOGENOM" id="CLU_027387_0_0_7"/>
<dbReference type="OrthoDB" id="9803760at2"/>
<dbReference type="UniPathway" id="UPA00219"/>
<dbReference type="Proteomes" id="UP000009071">
    <property type="component" value="Chromosome"/>
</dbReference>
<dbReference type="GO" id="GO:0005737">
    <property type="term" value="C:cytoplasm"/>
    <property type="evidence" value="ECO:0007669"/>
    <property type="project" value="UniProtKB-SubCell"/>
</dbReference>
<dbReference type="GO" id="GO:0008760">
    <property type="term" value="F:UDP-N-acetylglucosamine 1-carboxyvinyltransferase activity"/>
    <property type="evidence" value="ECO:0007669"/>
    <property type="project" value="UniProtKB-UniRule"/>
</dbReference>
<dbReference type="GO" id="GO:0051301">
    <property type="term" value="P:cell division"/>
    <property type="evidence" value="ECO:0007669"/>
    <property type="project" value="UniProtKB-KW"/>
</dbReference>
<dbReference type="GO" id="GO:0071555">
    <property type="term" value="P:cell wall organization"/>
    <property type="evidence" value="ECO:0007669"/>
    <property type="project" value="UniProtKB-KW"/>
</dbReference>
<dbReference type="GO" id="GO:0009252">
    <property type="term" value="P:peptidoglycan biosynthetic process"/>
    <property type="evidence" value="ECO:0007669"/>
    <property type="project" value="UniProtKB-UniRule"/>
</dbReference>
<dbReference type="GO" id="GO:0008360">
    <property type="term" value="P:regulation of cell shape"/>
    <property type="evidence" value="ECO:0007669"/>
    <property type="project" value="UniProtKB-KW"/>
</dbReference>
<dbReference type="GO" id="GO:0019277">
    <property type="term" value="P:UDP-N-acetylgalactosamine biosynthetic process"/>
    <property type="evidence" value="ECO:0007669"/>
    <property type="project" value="InterPro"/>
</dbReference>
<dbReference type="CDD" id="cd01555">
    <property type="entry name" value="UdpNAET"/>
    <property type="match status" value="1"/>
</dbReference>
<dbReference type="FunFam" id="3.65.10.10:FF:000001">
    <property type="entry name" value="UDP-N-acetylglucosamine 1-carboxyvinyltransferase"/>
    <property type="match status" value="1"/>
</dbReference>
<dbReference type="Gene3D" id="3.65.10.10">
    <property type="entry name" value="Enolpyruvate transferase domain"/>
    <property type="match status" value="2"/>
</dbReference>
<dbReference type="HAMAP" id="MF_00111">
    <property type="entry name" value="MurA"/>
    <property type="match status" value="1"/>
</dbReference>
<dbReference type="InterPro" id="IPR001986">
    <property type="entry name" value="Enolpyruvate_Tfrase_dom"/>
</dbReference>
<dbReference type="InterPro" id="IPR036968">
    <property type="entry name" value="Enolpyruvate_Tfrase_sf"/>
</dbReference>
<dbReference type="InterPro" id="IPR050068">
    <property type="entry name" value="MurA_subfamily"/>
</dbReference>
<dbReference type="InterPro" id="IPR013792">
    <property type="entry name" value="RNA3'P_cycl/enolpyr_Trfase_a/b"/>
</dbReference>
<dbReference type="InterPro" id="IPR005750">
    <property type="entry name" value="UDP_GlcNAc_COvinyl_MurA"/>
</dbReference>
<dbReference type="NCBIfam" id="TIGR01072">
    <property type="entry name" value="murA"/>
    <property type="match status" value="1"/>
</dbReference>
<dbReference type="NCBIfam" id="NF006873">
    <property type="entry name" value="PRK09369.1"/>
    <property type="match status" value="1"/>
</dbReference>
<dbReference type="PANTHER" id="PTHR43783">
    <property type="entry name" value="UDP-N-ACETYLGLUCOSAMINE 1-CARBOXYVINYLTRANSFERASE"/>
    <property type="match status" value="1"/>
</dbReference>
<dbReference type="PANTHER" id="PTHR43783:SF1">
    <property type="entry name" value="UDP-N-ACETYLGLUCOSAMINE 1-CARBOXYVINYLTRANSFERASE"/>
    <property type="match status" value="1"/>
</dbReference>
<dbReference type="Pfam" id="PF00275">
    <property type="entry name" value="EPSP_synthase"/>
    <property type="match status" value="1"/>
</dbReference>
<dbReference type="SUPFAM" id="SSF55205">
    <property type="entry name" value="EPT/RTPC-like"/>
    <property type="match status" value="1"/>
</dbReference>
<accession>C4XR49</accession>
<organism>
    <name type="scientific">Solidesulfovibrio magneticus (strain ATCC 700980 / DSM 13731 / RS-1)</name>
    <name type="common">Desulfovibrio magneticus</name>
    <dbReference type="NCBI Taxonomy" id="573370"/>
    <lineage>
        <taxon>Bacteria</taxon>
        <taxon>Pseudomonadati</taxon>
        <taxon>Thermodesulfobacteriota</taxon>
        <taxon>Desulfovibrionia</taxon>
        <taxon>Desulfovibrionales</taxon>
        <taxon>Desulfovibrionaceae</taxon>
        <taxon>Solidesulfovibrio</taxon>
    </lineage>
</organism>
<sequence>MDKLLIRGGKPLNGPIRVSGSKNAALPILLAAPLLTEKTVVDNVPRLRDIHTTLKLNEILGCPSTFEGNTVTMEPAANLNPEAPYDLVRTMRASVLVLGPLLARTGRARVALPGGCAIGARPVNLHLTALEKMGATFTLEAGYIEGRCDRLTGAHIVFDFPTVGGTENLLMAASLAEGTTILENAAREPEVADLADFLNAMGAKITGHGTSVITIEGVPSLGGGRYSVMPDRIEAATYMIAAAITGGELHLECCPFMELDAVVSKLREMGVVIEATNAGVAVRRQGQLVGVDVATQVYPGFPTDVQAQIMALMCVAVGSSSIRETIFENRFMHVQELVRLGAQIRISSQTAFIRGVGTLTGAPVMASDLRASASLVLAGLAAKGETLIQRVYHLDRGYEAMEVKLQNVGADIERLT</sequence>
<keyword id="KW-0131">Cell cycle</keyword>
<keyword id="KW-0132">Cell division</keyword>
<keyword id="KW-0133">Cell shape</keyword>
<keyword id="KW-0961">Cell wall biogenesis/degradation</keyword>
<keyword id="KW-0963">Cytoplasm</keyword>
<keyword id="KW-0573">Peptidoglycan synthesis</keyword>
<keyword id="KW-0670">Pyruvate</keyword>
<keyword id="KW-0808">Transferase</keyword>
<name>MURA_SOLM1</name>
<gene>
    <name evidence="1" type="primary">murA</name>
    <name type="ordered locus">DMR_19030</name>
</gene>
<reference key="1">
    <citation type="journal article" date="2009" name="Genome Res.">
        <title>Whole genome sequence of Desulfovibrio magneticus strain RS-1 revealed common gene clusters in magnetotactic bacteria.</title>
        <authorList>
            <person name="Nakazawa H."/>
            <person name="Arakaki A."/>
            <person name="Narita-Yamada S."/>
            <person name="Yashiro I."/>
            <person name="Jinno K."/>
            <person name="Aoki N."/>
            <person name="Tsuruyama A."/>
            <person name="Okamura Y."/>
            <person name="Tanikawa S."/>
            <person name="Fujita N."/>
            <person name="Takeyama H."/>
            <person name="Matsunaga T."/>
        </authorList>
    </citation>
    <scope>NUCLEOTIDE SEQUENCE [LARGE SCALE GENOMIC DNA]</scope>
    <source>
        <strain>ATCC 700980 / DSM 13731 / RS-1</strain>
    </source>
</reference>
<proteinExistence type="inferred from homology"/>
<protein>
    <recommendedName>
        <fullName evidence="1">UDP-N-acetylglucosamine 1-carboxyvinyltransferase</fullName>
        <ecNumber evidence="1">2.5.1.7</ecNumber>
    </recommendedName>
    <alternativeName>
        <fullName evidence="1">Enoylpyruvate transferase</fullName>
    </alternativeName>
    <alternativeName>
        <fullName evidence="1">UDP-N-acetylglucosamine enolpyruvyl transferase</fullName>
        <shortName evidence="1">EPT</shortName>
    </alternativeName>
</protein>
<feature type="chain" id="PRO_1000202927" description="UDP-N-acetylglucosamine 1-carboxyvinyltransferase">
    <location>
        <begin position="1"/>
        <end position="416"/>
    </location>
</feature>
<feature type="active site" description="Proton donor" evidence="1">
    <location>
        <position position="116"/>
    </location>
</feature>
<feature type="binding site" evidence="1">
    <location>
        <begin position="22"/>
        <end position="23"/>
    </location>
    <ligand>
        <name>phosphoenolpyruvate</name>
        <dbReference type="ChEBI" id="CHEBI:58702"/>
    </ligand>
</feature>
<feature type="binding site" evidence="1">
    <location>
        <position position="92"/>
    </location>
    <ligand>
        <name>UDP-N-acetyl-alpha-D-glucosamine</name>
        <dbReference type="ChEBI" id="CHEBI:57705"/>
    </ligand>
</feature>
<feature type="binding site" evidence="1">
    <location>
        <position position="304"/>
    </location>
    <ligand>
        <name>UDP-N-acetyl-alpha-D-glucosamine</name>
        <dbReference type="ChEBI" id="CHEBI:57705"/>
    </ligand>
</feature>
<feature type="binding site" evidence="1">
    <location>
        <position position="326"/>
    </location>
    <ligand>
        <name>UDP-N-acetyl-alpha-D-glucosamine</name>
        <dbReference type="ChEBI" id="CHEBI:57705"/>
    </ligand>
</feature>
<feature type="modified residue" description="2-(S-cysteinyl)pyruvic acid O-phosphothioketal" evidence="1">
    <location>
        <position position="116"/>
    </location>
</feature>
<comment type="function">
    <text evidence="1">Cell wall formation. Adds enolpyruvyl to UDP-N-acetylglucosamine.</text>
</comment>
<comment type="catalytic activity">
    <reaction evidence="1">
        <text>phosphoenolpyruvate + UDP-N-acetyl-alpha-D-glucosamine = UDP-N-acetyl-3-O-(1-carboxyvinyl)-alpha-D-glucosamine + phosphate</text>
        <dbReference type="Rhea" id="RHEA:18681"/>
        <dbReference type="ChEBI" id="CHEBI:43474"/>
        <dbReference type="ChEBI" id="CHEBI:57705"/>
        <dbReference type="ChEBI" id="CHEBI:58702"/>
        <dbReference type="ChEBI" id="CHEBI:68483"/>
        <dbReference type="EC" id="2.5.1.7"/>
    </reaction>
</comment>
<comment type="pathway">
    <text evidence="1">Cell wall biogenesis; peptidoglycan biosynthesis.</text>
</comment>
<comment type="subcellular location">
    <subcellularLocation>
        <location evidence="1">Cytoplasm</location>
    </subcellularLocation>
</comment>
<comment type="similarity">
    <text evidence="1">Belongs to the EPSP synthase family. MurA subfamily.</text>
</comment>